<organism>
    <name type="scientific">Phaeosphaeria nodorum (strain SN15 / ATCC MYA-4574 / FGSC 10173)</name>
    <name type="common">Glume blotch fungus</name>
    <name type="synonym">Parastagonospora nodorum</name>
    <dbReference type="NCBI Taxonomy" id="321614"/>
    <lineage>
        <taxon>Eukaryota</taxon>
        <taxon>Fungi</taxon>
        <taxon>Dikarya</taxon>
        <taxon>Ascomycota</taxon>
        <taxon>Pezizomycotina</taxon>
        <taxon>Dothideomycetes</taxon>
        <taxon>Pleosporomycetidae</taxon>
        <taxon>Pleosporales</taxon>
        <taxon>Pleosporineae</taxon>
        <taxon>Phaeosphaeriaceae</taxon>
        <taxon>Parastagonospora</taxon>
    </lineage>
</organism>
<accession>Q0UZH1</accession>
<name>NNRE_PHANO</name>
<sequence>MIKIPLNTLSAKSAAALDQELMSSGAFSIDQLMELAGLSVSQAVFKLQPLNKGKRILVACGPGNNGGDGLVAARHLFHYGYQPTIYYPKQSKNELYQRLRKQLEDLKVPFTEDFPGALKQTDHVVDAIFGFSFSGEVREPFPKVIEALESTSIPVLAVDAPSSWSIEDGPPESGPGKGFMPPALISLTAPKPLVKHFKGRHFLGGRFLSPEMAEQYNLDIPKYEGLDQVVEVPVESGKL</sequence>
<comment type="function">
    <text evidence="1">Catalyzes the epimerization of the S- and R-forms of NAD(P)HX, a damaged form of NAD(P)H that is a result of enzymatic or heat-dependent hydration. This is a prerequisite for the S-specific NAD(P)H-hydrate dehydratase to allow the repair of both epimers of NAD(P)HX.</text>
</comment>
<comment type="catalytic activity">
    <reaction>
        <text>(6R)-NADHX = (6S)-NADHX</text>
        <dbReference type="Rhea" id="RHEA:32215"/>
        <dbReference type="ChEBI" id="CHEBI:64074"/>
        <dbReference type="ChEBI" id="CHEBI:64075"/>
        <dbReference type="EC" id="5.1.99.6"/>
    </reaction>
</comment>
<comment type="catalytic activity">
    <reaction>
        <text>(6R)-NADPHX = (6S)-NADPHX</text>
        <dbReference type="Rhea" id="RHEA:32227"/>
        <dbReference type="ChEBI" id="CHEBI:64076"/>
        <dbReference type="ChEBI" id="CHEBI:64077"/>
        <dbReference type="EC" id="5.1.99.6"/>
    </reaction>
</comment>
<comment type="cofactor">
    <cofactor evidence="1">
        <name>K(+)</name>
        <dbReference type="ChEBI" id="CHEBI:29103"/>
    </cofactor>
    <text evidence="1">Binds 1 potassium ion per subunit.</text>
</comment>
<comment type="subcellular location">
    <subcellularLocation>
        <location evidence="1">Cytoplasm</location>
    </subcellularLocation>
    <subcellularLocation>
        <location evidence="1">Mitochondrion</location>
    </subcellularLocation>
</comment>
<comment type="similarity">
    <text evidence="1">Belongs to the NnrE/AIBP family.</text>
</comment>
<gene>
    <name type="ORF">SNOG_02843</name>
</gene>
<feature type="chain" id="PRO_0000416337" description="NAD(P)H-hydrate epimerase">
    <location>
        <begin position="1"/>
        <end position="239"/>
    </location>
</feature>
<feature type="domain" description="YjeF N-terminal" evidence="1">
    <location>
        <begin position="14"/>
        <end position="220"/>
    </location>
</feature>
<feature type="binding site" evidence="1">
    <location>
        <begin position="64"/>
        <end position="68"/>
    </location>
    <ligand>
        <name>(6S)-NADPHX</name>
        <dbReference type="ChEBI" id="CHEBI:64076"/>
    </ligand>
</feature>
<feature type="binding site" evidence="1">
    <location>
        <position position="65"/>
    </location>
    <ligand>
        <name>K(+)</name>
        <dbReference type="ChEBI" id="CHEBI:29103"/>
    </ligand>
</feature>
<feature type="binding site" evidence="1">
    <location>
        <position position="126"/>
    </location>
    <ligand>
        <name>K(+)</name>
        <dbReference type="ChEBI" id="CHEBI:29103"/>
    </ligand>
</feature>
<feature type="binding site" evidence="1">
    <location>
        <begin position="130"/>
        <end position="136"/>
    </location>
    <ligand>
        <name>(6S)-NADPHX</name>
        <dbReference type="ChEBI" id="CHEBI:64076"/>
    </ligand>
</feature>
<feature type="binding site" evidence="1">
    <location>
        <position position="159"/>
    </location>
    <ligand>
        <name>(6S)-NADPHX</name>
        <dbReference type="ChEBI" id="CHEBI:64076"/>
    </ligand>
</feature>
<feature type="binding site" evidence="1">
    <location>
        <position position="162"/>
    </location>
    <ligand>
        <name>K(+)</name>
        <dbReference type="ChEBI" id="CHEBI:29103"/>
    </ligand>
</feature>
<evidence type="ECO:0000255" key="1">
    <source>
        <dbReference type="HAMAP-Rule" id="MF_03159"/>
    </source>
</evidence>
<proteinExistence type="inferred from homology"/>
<protein>
    <recommendedName>
        <fullName evidence="1">NAD(P)H-hydrate epimerase</fullName>
        <ecNumber>5.1.99.6</ecNumber>
    </recommendedName>
    <alternativeName>
        <fullName evidence="1">NAD(P)HX epimerase</fullName>
    </alternativeName>
</protein>
<dbReference type="EC" id="5.1.99.6"/>
<dbReference type="EMBL" id="CH445328">
    <property type="protein sequence ID" value="EAT89574.2"/>
    <property type="molecule type" value="Genomic_DNA"/>
</dbReference>
<dbReference type="RefSeq" id="XP_001793436.1">
    <property type="nucleotide sequence ID" value="XM_001793384.1"/>
</dbReference>
<dbReference type="SMR" id="Q0UZH1"/>
<dbReference type="FunCoup" id="Q0UZH1">
    <property type="interactions" value="245"/>
</dbReference>
<dbReference type="STRING" id="321614.Q0UZH1"/>
<dbReference type="EnsemblFungi" id="SNOT_02843">
    <property type="protein sequence ID" value="SNOT_02843"/>
    <property type="gene ID" value="SNOG_02843"/>
</dbReference>
<dbReference type="GeneID" id="5970293"/>
<dbReference type="KEGG" id="pno:SNOG_02843"/>
<dbReference type="VEuPathDB" id="FungiDB:JI435_028430"/>
<dbReference type="eggNOG" id="KOG2585">
    <property type="taxonomic scope" value="Eukaryota"/>
</dbReference>
<dbReference type="HOGENOM" id="CLU_024853_3_0_1"/>
<dbReference type="InParanoid" id="Q0UZH1"/>
<dbReference type="Proteomes" id="UP000001055">
    <property type="component" value="Unassembled WGS sequence"/>
</dbReference>
<dbReference type="GO" id="GO:0005739">
    <property type="term" value="C:mitochondrion"/>
    <property type="evidence" value="ECO:0000318"/>
    <property type="project" value="GO_Central"/>
</dbReference>
<dbReference type="GO" id="GO:0046872">
    <property type="term" value="F:metal ion binding"/>
    <property type="evidence" value="ECO:0007669"/>
    <property type="project" value="UniProtKB-KW"/>
</dbReference>
<dbReference type="GO" id="GO:0052856">
    <property type="term" value="F:NAD(P)HX epimerase activity"/>
    <property type="evidence" value="ECO:0000318"/>
    <property type="project" value="GO_Central"/>
</dbReference>
<dbReference type="GO" id="GO:0000166">
    <property type="term" value="F:nucleotide binding"/>
    <property type="evidence" value="ECO:0007669"/>
    <property type="project" value="UniProtKB-KW"/>
</dbReference>
<dbReference type="FunFam" id="3.40.50.10260:FF:000005">
    <property type="entry name" value="NAD(P)H-hydrate epimerase"/>
    <property type="match status" value="1"/>
</dbReference>
<dbReference type="Gene3D" id="3.40.50.10260">
    <property type="entry name" value="YjeF N-terminal domain"/>
    <property type="match status" value="1"/>
</dbReference>
<dbReference type="HAMAP" id="MF_01966">
    <property type="entry name" value="NADHX_epimerase"/>
    <property type="match status" value="1"/>
</dbReference>
<dbReference type="InterPro" id="IPR004443">
    <property type="entry name" value="YjeF_N_dom"/>
</dbReference>
<dbReference type="InterPro" id="IPR036652">
    <property type="entry name" value="YjeF_N_dom_sf"/>
</dbReference>
<dbReference type="InterPro" id="IPR032976">
    <property type="entry name" value="YJEFN_prot_NAXE-like"/>
</dbReference>
<dbReference type="NCBIfam" id="TIGR00197">
    <property type="entry name" value="yjeF_nterm"/>
    <property type="match status" value="1"/>
</dbReference>
<dbReference type="PANTHER" id="PTHR13232">
    <property type="entry name" value="NAD(P)H-HYDRATE EPIMERASE"/>
    <property type="match status" value="1"/>
</dbReference>
<dbReference type="PANTHER" id="PTHR13232:SF10">
    <property type="entry name" value="NAD(P)H-HYDRATE EPIMERASE"/>
    <property type="match status" value="1"/>
</dbReference>
<dbReference type="Pfam" id="PF03853">
    <property type="entry name" value="YjeF_N"/>
    <property type="match status" value="1"/>
</dbReference>
<dbReference type="SUPFAM" id="SSF64153">
    <property type="entry name" value="YjeF N-terminal domain-like"/>
    <property type="match status" value="1"/>
</dbReference>
<dbReference type="PROSITE" id="PS51385">
    <property type="entry name" value="YJEF_N"/>
    <property type="match status" value="1"/>
</dbReference>
<reference key="1">
    <citation type="journal article" date="2007" name="Plant Cell">
        <title>Dothideomycete-plant interactions illuminated by genome sequencing and EST analysis of the wheat pathogen Stagonospora nodorum.</title>
        <authorList>
            <person name="Hane J.K."/>
            <person name="Lowe R.G.T."/>
            <person name="Solomon P.S."/>
            <person name="Tan K.-C."/>
            <person name="Schoch C.L."/>
            <person name="Spatafora J.W."/>
            <person name="Crous P.W."/>
            <person name="Kodira C.D."/>
            <person name="Birren B.W."/>
            <person name="Galagan J.E."/>
            <person name="Torriani S.F.F."/>
            <person name="McDonald B.A."/>
            <person name="Oliver R.P."/>
        </authorList>
    </citation>
    <scope>NUCLEOTIDE SEQUENCE [LARGE SCALE GENOMIC DNA]</scope>
    <source>
        <strain>SN15 / ATCC MYA-4574 / FGSC 10173</strain>
    </source>
</reference>
<keyword id="KW-0963">Cytoplasm</keyword>
<keyword id="KW-0413">Isomerase</keyword>
<keyword id="KW-0479">Metal-binding</keyword>
<keyword id="KW-0496">Mitochondrion</keyword>
<keyword id="KW-0520">NAD</keyword>
<keyword id="KW-0521">NADP</keyword>
<keyword id="KW-0547">Nucleotide-binding</keyword>
<keyword id="KW-0630">Potassium</keyword>